<accession>Q00238</accession>
<protein>
    <recommendedName>
        <fullName>Intercellular adhesion molecule 1</fullName>
        <shortName>ICAM-1</shortName>
    </recommendedName>
    <cdAntigenName>CD54</cdAntigenName>
</protein>
<proteinExistence type="evidence at transcript level"/>
<name>ICAM1_RAT</name>
<dbReference type="EMBL" id="D00913">
    <property type="protein sequence ID" value="BAA00759.1"/>
    <property type="molecule type" value="mRNA"/>
</dbReference>
<dbReference type="EMBL" id="BC081837">
    <property type="protein sequence ID" value="AAH81837.1"/>
    <property type="molecule type" value="mRNA"/>
</dbReference>
<dbReference type="PIR" id="S21765">
    <property type="entry name" value="JU0341"/>
</dbReference>
<dbReference type="RefSeq" id="NP_037099.1">
    <property type="nucleotide sequence ID" value="NM_012967.1"/>
</dbReference>
<dbReference type="SMR" id="Q00238"/>
<dbReference type="BioGRID" id="247497">
    <property type="interactions" value="1"/>
</dbReference>
<dbReference type="FunCoup" id="Q00238">
    <property type="interactions" value="513"/>
</dbReference>
<dbReference type="STRING" id="10116.ENSRNOP00000028066"/>
<dbReference type="GlyCosmos" id="Q00238">
    <property type="glycosylation" value="10 sites, No reported glycans"/>
</dbReference>
<dbReference type="GlyGen" id="Q00238">
    <property type="glycosylation" value="10 sites"/>
</dbReference>
<dbReference type="PhosphoSitePlus" id="Q00238"/>
<dbReference type="PaxDb" id="10116-ENSRNOP00000028066"/>
<dbReference type="GeneID" id="25464"/>
<dbReference type="KEGG" id="rno:25464"/>
<dbReference type="UCSC" id="RGD:2857">
    <property type="organism name" value="rat"/>
</dbReference>
<dbReference type="AGR" id="RGD:2857"/>
<dbReference type="CTD" id="3383"/>
<dbReference type="RGD" id="2857">
    <property type="gene designation" value="Icam1"/>
</dbReference>
<dbReference type="VEuPathDB" id="HostDB:ENSRNOG00000020679"/>
<dbReference type="eggNOG" id="ENOG502RZRA">
    <property type="taxonomic scope" value="Eukaryota"/>
</dbReference>
<dbReference type="HOGENOM" id="CLU_036160_1_1_1"/>
<dbReference type="InParanoid" id="Q00238"/>
<dbReference type="OrthoDB" id="6250964at2759"/>
<dbReference type="PhylomeDB" id="Q00238"/>
<dbReference type="TreeFam" id="TF333745"/>
<dbReference type="Reactome" id="R-RNO-198933">
    <property type="pathway name" value="Immunoregulatory interactions between a Lymphoid and a non-Lymphoid cell"/>
</dbReference>
<dbReference type="Reactome" id="R-RNO-216083">
    <property type="pathway name" value="Integrin cell surface interactions"/>
</dbReference>
<dbReference type="PRO" id="PR:Q00238"/>
<dbReference type="Proteomes" id="UP000002494">
    <property type="component" value="Chromosome 8"/>
</dbReference>
<dbReference type="Bgee" id="ENSRNOG00000020679">
    <property type="expression patterns" value="Expressed in lung and 18 other cell types or tissues"/>
</dbReference>
<dbReference type="GO" id="GO:0009986">
    <property type="term" value="C:cell surface"/>
    <property type="evidence" value="ECO:0000314"/>
    <property type="project" value="RGD"/>
</dbReference>
<dbReference type="GO" id="GO:0009897">
    <property type="term" value="C:external side of plasma membrane"/>
    <property type="evidence" value="ECO:0000266"/>
    <property type="project" value="RGD"/>
</dbReference>
<dbReference type="GO" id="GO:0070062">
    <property type="term" value="C:extracellular exosome"/>
    <property type="evidence" value="ECO:0000266"/>
    <property type="project" value="RGD"/>
</dbReference>
<dbReference type="GO" id="GO:0005615">
    <property type="term" value="C:extracellular space"/>
    <property type="evidence" value="ECO:0000314"/>
    <property type="project" value="RGD"/>
</dbReference>
<dbReference type="GO" id="GO:0001772">
    <property type="term" value="C:immunological synapse"/>
    <property type="evidence" value="ECO:0000266"/>
    <property type="project" value="RGD"/>
</dbReference>
<dbReference type="GO" id="GO:0045121">
    <property type="term" value="C:membrane raft"/>
    <property type="evidence" value="ECO:0000266"/>
    <property type="project" value="RGD"/>
</dbReference>
<dbReference type="GO" id="GO:0005886">
    <property type="term" value="C:plasma membrane"/>
    <property type="evidence" value="ECO:0000318"/>
    <property type="project" value="GO_Central"/>
</dbReference>
<dbReference type="GO" id="GO:0005178">
    <property type="term" value="F:integrin binding"/>
    <property type="evidence" value="ECO:0000315"/>
    <property type="project" value="RGD"/>
</dbReference>
<dbReference type="GO" id="GO:0044877">
    <property type="term" value="F:protein-containing complex binding"/>
    <property type="evidence" value="ECO:0000353"/>
    <property type="project" value="RGD"/>
</dbReference>
<dbReference type="GO" id="GO:0002438">
    <property type="term" value="P:acute inflammatory response to antigenic stimulus"/>
    <property type="evidence" value="ECO:0000315"/>
    <property type="project" value="RGD"/>
</dbReference>
<dbReference type="GO" id="GO:0007155">
    <property type="term" value="P:cell adhesion"/>
    <property type="evidence" value="ECO:0000266"/>
    <property type="project" value="RGD"/>
</dbReference>
<dbReference type="GO" id="GO:0033627">
    <property type="term" value="P:cell adhesion mediated by integrin"/>
    <property type="evidence" value="ECO:0000266"/>
    <property type="project" value="RGD"/>
</dbReference>
<dbReference type="GO" id="GO:0098609">
    <property type="term" value="P:cell-cell adhesion"/>
    <property type="evidence" value="ECO:0000314"/>
    <property type="project" value="RGD"/>
</dbReference>
<dbReference type="GO" id="GO:0071312">
    <property type="term" value="P:cellular response to alkaloid"/>
    <property type="evidence" value="ECO:0000270"/>
    <property type="project" value="RGD"/>
</dbReference>
<dbReference type="GO" id="GO:1904646">
    <property type="term" value="P:cellular response to amyloid-beta"/>
    <property type="evidence" value="ECO:0000266"/>
    <property type="project" value="RGD"/>
</dbReference>
<dbReference type="GO" id="GO:0071549">
    <property type="term" value="P:cellular response to dexamethasone stimulus"/>
    <property type="evidence" value="ECO:0000270"/>
    <property type="project" value="RGD"/>
</dbReference>
<dbReference type="GO" id="GO:0071333">
    <property type="term" value="P:cellular response to glucose stimulus"/>
    <property type="evidence" value="ECO:0000270"/>
    <property type="project" value="RGD"/>
</dbReference>
<dbReference type="GO" id="GO:0071456">
    <property type="term" value="P:cellular response to hypoxia"/>
    <property type="evidence" value="ECO:0000270"/>
    <property type="project" value="RGD"/>
</dbReference>
<dbReference type="GO" id="GO:0071347">
    <property type="term" value="P:cellular response to interleukin-1"/>
    <property type="evidence" value="ECO:0000270"/>
    <property type="project" value="RGD"/>
</dbReference>
<dbReference type="GO" id="GO:0071354">
    <property type="term" value="P:cellular response to interleukin-6"/>
    <property type="evidence" value="ECO:0000270"/>
    <property type="project" value="RGD"/>
</dbReference>
<dbReference type="GO" id="GO:1990830">
    <property type="term" value="P:cellular response to leukemia inhibitory factor"/>
    <property type="evidence" value="ECO:0000266"/>
    <property type="project" value="RGD"/>
</dbReference>
<dbReference type="GO" id="GO:0071222">
    <property type="term" value="P:cellular response to lipopolysaccharide"/>
    <property type="evidence" value="ECO:0000270"/>
    <property type="project" value="RGD"/>
</dbReference>
<dbReference type="GO" id="GO:0031669">
    <property type="term" value="P:cellular response to nutrient levels"/>
    <property type="evidence" value="ECO:0000270"/>
    <property type="project" value="RGD"/>
</dbReference>
<dbReference type="GO" id="GO:0071356">
    <property type="term" value="P:cellular response to tumor necrosis factor"/>
    <property type="evidence" value="ECO:0000270"/>
    <property type="project" value="RGD"/>
</dbReference>
<dbReference type="GO" id="GO:0071346">
    <property type="term" value="P:cellular response to type II interferon"/>
    <property type="evidence" value="ECO:0000270"/>
    <property type="project" value="RGD"/>
</dbReference>
<dbReference type="GO" id="GO:0090398">
    <property type="term" value="P:cellular senescence"/>
    <property type="evidence" value="ECO:0000270"/>
    <property type="project" value="RGD"/>
</dbReference>
<dbReference type="GO" id="GO:0061028">
    <property type="term" value="P:establishment of endothelial barrier"/>
    <property type="evidence" value="ECO:0000266"/>
    <property type="project" value="RGD"/>
</dbReference>
<dbReference type="GO" id="GO:0090557">
    <property type="term" value="P:establishment of endothelial intestinal barrier"/>
    <property type="evidence" value="ECO:0000315"/>
    <property type="project" value="RGD"/>
</dbReference>
<dbReference type="GO" id="GO:0097368">
    <property type="term" value="P:establishment of Sertoli cell barrier"/>
    <property type="evidence" value="ECO:0000314"/>
    <property type="project" value="RGD"/>
</dbReference>
<dbReference type="GO" id="GO:0007159">
    <property type="term" value="P:leukocyte cell-cell adhesion"/>
    <property type="evidence" value="ECO:0000266"/>
    <property type="project" value="RGD"/>
</dbReference>
<dbReference type="GO" id="GO:0050900">
    <property type="term" value="P:leukocyte migration"/>
    <property type="evidence" value="ECO:0000266"/>
    <property type="project" value="RGD"/>
</dbReference>
<dbReference type="GO" id="GO:0022614">
    <property type="term" value="P:membrane to membrane docking"/>
    <property type="evidence" value="ECO:0000266"/>
    <property type="project" value="RGD"/>
</dbReference>
<dbReference type="GO" id="GO:0051926">
    <property type="term" value="P:negative regulation of calcium ion transport"/>
    <property type="evidence" value="ECO:0000314"/>
    <property type="project" value="RGD"/>
</dbReference>
<dbReference type="GO" id="GO:2000352">
    <property type="term" value="P:negative regulation of endothelial cell apoptotic process"/>
    <property type="evidence" value="ECO:0000266"/>
    <property type="project" value="RGD"/>
</dbReference>
<dbReference type="GO" id="GO:1902042">
    <property type="term" value="P:negative regulation of extrinsic apoptotic signaling pathway via death domain receptors"/>
    <property type="evidence" value="ECO:0000266"/>
    <property type="project" value="RGD"/>
</dbReference>
<dbReference type="GO" id="GO:0001541">
    <property type="term" value="P:ovarian follicle development"/>
    <property type="evidence" value="ECO:0000270"/>
    <property type="project" value="RGD"/>
</dbReference>
<dbReference type="GO" id="GO:0030838">
    <property type="term" value="P:positive regulation of actin filament polymerization"/>
    <property type="evidence" value="ECO:0000314"/>
    <property type="project" value="RGD"/>
</dbReference>
<dbReference type="GO" id="GO:0002693">
    <property type="term" value="P:positive regulation of cellular extravasation"/>
    <property type="evidence" value="ECO:0000266"/>
    <property type="project" value="RGD"/>
</dbReference>
<dbReference type="GO" id="GO:0070374">
    <property type="term" value="P:positive regulation of ERK1 and ERK2 cascade"/>
    <property type="evidence" value="ECO:0000266"/>
    <property type="project" value="RGD"/>
</dbReference>
<dbReference type="GO" id="GO:1904996">
    <property type="term" value="P:positive regulation of leukocyte adhesion to vascular endothelial cell"/>
    <property type="evidence" value="ECO:0000315"/>
    <property type="project" value="RGD"/>
</dbReference>
<dbReference type="GO" id="GO:0045429">
    <property type="term" value="P:positive regulation of nitric oxide biosynthetic process"/>
    <property type="evidence" value="ECO:0000315"/>
    <property type="project" value="RGD"/>
</dbReference>
<dbReference type="GO" id="GO:0070234">
    <property type="term" value="P:positive regulation of T cell apoptotic process"/>
    <property type="evidence" value="ECO:0000266"/>
    <property type="project" value="RGD"/>
</dbReference>
<dbReference type="GO" id="GO:0045907">
    <property type="term" value="P:positive regulation of vasoconstriction"/>
    <property type="evidence" value="ECO:0000315"/>
    <property type="project" value="RGD"/>
</dbReference>
<dbReference type="GO" id="GO:0008360">
    <property type="term" value="P:regulation of cell shape"/>
    <property type="evidence" value="ECO:0000315"/>
    <property type="project" value="RGD"/>
</dbReference>
<dbReference type="GO" id="GO:1900027">
    <property type="term" value="P:regulation of ruffle assembly"/>
    <property type="evidence" value="ECO:0000266"/>
    <property type="project" value="RGD"/>
</dbReference>
<dbReference type="GO" id="GO:1904316">
    <property type="term" value="P:response to 2-O-acetyl-1-O-hexadecyl-sn-glycero-3-phosphocholine"/>
    <property type="evidence" value="ECO:0000270"/>
    <property type="project" value="RGD"/>
</dbReference>
<dbReference type="GO" id="GO:0043200">
    <property type="term" value="P:response to amino acid"/>
    <property type="evidence" value="ECO:0000270"/>
    <property type="project" value="RGD"/>
</dbReference>
<dbReference type="GO" id="GO:0001975">
    <property type="term" value="P:response to amphetamine"/>
    <property type="evidence" value="ECO:0000270"/>
    <property type="project" value="RGD"/>
</dbReference>
<dbReference type="GO" id="GO:0046688">
    <property type="term" value="P:response to copper ion"/>
    <property type="evidence" value="ECO:0000270"/>
    <property type="project" value="RGD"/>
</dbReference>
<dbReference type="GO" id="GO:0045471">
    <property type="term" value="P:response to ethanol"/>
    <property type="evidence" value="ECO:0000270"/>
    <property type="project" value="RGD"/>
</dbReference>
<dbReference type="GO" id="GO:0034698">
    <property type="term" value="P:response to gonadotropin"/>
    <property type="evidence" value="ECO:0000270"/>
    <property type="project" value="RGD"/>
</dbReference>
<dbReference type="GO" id="GO:0001666">
    <property type="term" value="P:response to hypoxia"/>
    <property type="evidence" value="ECO:0000270"/>
    <property type="project" value="RGD"/>
</dbReference>
<dbReference type="GO" id="GO:0032868">
    <property type="term" value="P:response to insulin"/>
    <property type="evidence" value="ECO:0000270"/>
    <property type="project" value="RGD"/>
</dbReference>
<dbReference type="GO" id="GO:0010212">
    <property type="term" value="P:response to ionizing radiation"/>
    <property type="evidence" value="ECO:0000270"/>
    <property type="project" value="RGD"/>
</dbReference>
<dbReference type="GO" id="GO:0032496">
    <property type="term" value="P:response to lipopolysaccharide"/>
    <property type="evidence" value="ECO:0000270"/>
    <property type="project" value="RGD"/>
</dbReference>
<dbReference type="GO" id="GO:0010477">
    <property type="term" value="P:response to sulfur dioxide"/>
    <property type="evidence" value="ECO:0000270"/>
    <property type="project" value="RGD"/>
</dbReference>
<dbReference type="GO" id="GO:0009410">
    <property type="term" value="P:response to xenobiotic stimulus"/>
    <property type="evidence" value="ECO:0000270"/>
    <property type="project" value="RGD"/>
</dbReference>
<dbReference type="GO" id="GO:0002291">
    <property type="term" value="P:T cell activation via T cell receptor contact with antigen bound to MHC molecule on antigen presenting cell"/>
    <property type="evidence" value="ECO:0000266"/>
    <property type="project" value="RGD"/>
</dbReference>
<dbReference type="GO" id="GO:0002457">
    <property type="term" value="P:T cell antigen processing and presentation"/>
    <property type="evidence" value="ECO:0000266"/>
    <property type="project" value="RGD"/>
</dbReference>
<dbReference type="GO" id="GO:0072683">
    <property type="term" value="P:T cell extravasation"/>
    <property type="evidence" value="ECO:0000266"/>
    <property type="project" value="RGD"/>
</dbReference>
<dbReference type="CDD" id="cd05755">
    <property type="entry name" value="IgC2_2_ICAM-1_like"/>
    <property type="match status" value="1"/>
</dbReference>
<dbReference type="CDD" id="cd20996">
    <property type="entry name" value="IgI_N_ICAM-1"/>
    <property type="match status" value="1"/>
</dbReference>
<dbReference type="FunFam" id="2.60.40.10:FF:000194">
    <property type="entry name" value="Intercellular adhesion molecule 1"/>
    <property type="match status" value="1"/>
</dbReference>
<dbReference type="FunFam" id="2.60.40.10:FF:000641">
    <property type="entry name" value="Intercellular adhesion molecule 1"/>
    <property type="match status" value="1"/>
</dbReference>
<dbReference type="FunFam" id="2.60.40.10:FF:000648">
    <property type="entry name" value="Intercellular adhesion molecule 1"/>
    <property type="match status" value="1"/>
</dbReference>
<dbReference type="FunFam" id="2.60.40.10:FF:000338">
    <property type="entry name" value="intercellular adhesion molecule 5"/>
    <property type="match status" value="1"/>
</dbReference>
<dbReference type="Gene3D" id="2.60.40.10">
    <property type="entry name" value="Immunoglobulins"/>
    <property type="match status" value="5"/>
</dbReference>
<dbReference type="InterPro" id="IPR003988">
    <property type="entry name" value="ICAM"/>
</dbReference>
<dbReference type="InterPro" id="IPR048679">
    <property type="entry name" value="ICAM1_3_5_D2"/>
</dbReference>
<dbReference type="InterPro" id="IPR013768">
    <property type="entry name" value="ICAM_N"/>
</dbReference>
<dbReference type="InterPro" id="IPR047012">
    <property type="entry name" value="ICAM_VCAM"/>
</dbReference>
<dbReference type="InterPro" id="IPR003987">
    <property type="entry name" value="ICAM_VCAM_N"/>
</dbReference>
<dbReference type="InterPro" id="IPR007110">
    <property type="entry name" value="Ig-like_dom"/>
</dbReference>
<dbReference type="InterPro" id="IPR036179">
    <property type="entry name" value="Ig-like_dom_sf"/>
</dbReference>
<dbReference type="InterPro" id="IPR013783">
    <property type="entry name" value="Ig-like_fold"/>
</dbReference>
<dbReference type="InterPro" id="IPR003599">
    <property type="entry name" value="Ig_sub"/>
</dbReference>
<dbReference type="PANTHER" id="PTHR13771">
    <property type="entry name" value="INTERCELLULAR ADHESION MOLECULE"/>
    <property type="match status" value="1"/>
</dbReference>
<dbReference type="PANTHER" id="PTHR13771:SF18">
    <property type="entry name" value="INTERCELLULAR ADHESION MOLECULE 1"/>
    <property type="match status" value="1"/>
</dbReference>
<dbReference type="Pfam" id="PF21146">
    <property type="entry name" value="ICAM1_3_5_D2"/>
    <property type="match status" value="1"/>
</dbReference>
<dbReference type="Pfam" id="PF03921">
    <property type="entry name" value="ICAM_N"/>
    <property type="match status" value="1"/>
</dbReference>
<dbReference type="Pfam" id="PF13895">
    <property type="entry name" value="Ig_2"/>
    <property type="match status" value="1"/>
</dbReference>
<dbReference type="PRINTS" id="PR01473">
    <property type="entry name" value="ICAM"/>
</dbReference>
<dbReference type="PRINTS" id="PR01472">
    <property type="entry name" value="ICAMVCAM1"/>
</dbReference>
<dbReference type="SMART" id="SM00409">
    <property type="entry name" value="IG"/>
    <property type="match status" value="4"/>
</dbReference>
<dbReference type="SUPFAM" id="SSF48726">
    <property type="entry name" value="Immunoglobulin"/>
    <property type="match status" value="5"/>
</dbReference>
<dbReference type="PROSITE" id="PS50835">
    <property type="entry name" value="IG_LIKE"/>
    <property type="match status" value="1"/>
</dbReference>
<keyword id="KW-0130">Cell adhesion</keyword>
<keyword id="KW-1015">Disulfide bond</keyword>
<keyword id="KW-0325">Glycoprotein</keyword>
<keyword id="KW-0393">Immunoglobulin domain</keyword>
<keyword id="KW-0472">Membrane</keyword>
<keyword id="KW-1185">Reference proteome</keyword>
<keyword id="KW-0677">Repeat</keyword>
<keyword id="KW-0732">Signal</keyword>
<keyword id="KW-0812">Transmembrane</keyword>
<keyword id="KW-1133">Transmembrane helix</keyword>
<keyword id="KW-0832">Ubl conjugation</keyword>
<evidence type="ECO:0000250" key="1"/>
<evidence type="ECO:0000250" key="2">
    <source>
        <dbReference type="UniProtKB" id="P05362"/>
    </source>
</evidence>
<evidence type="ECO:0000255" key="3"/>
<evidence type="ECO:0000255" key="4">
    <source>
        <dbReference type="PROSITE-ProRule" id="PRU00114"/>
    </source>
</evidence>
<evidence type="ECO:0000256" key="5">
    <source>
        <dbReference type="SAM" id="MobiDB-lite"/>
    </source>
</evidence>
<evidence type="ECO:0000305" key="6"/>
<reference key="1">
    <citation type="journal article" date="1992" name="Biochim. Biophys. Acta">
        <title>Sequence and expression of rat ICAM-1.</title>
        <authorList>
            <person name="Kita Y."/>
            <person name="Takashi T."/>
            <person name="Iigo Y."/>
            <person name="Tamatani T."/>
            <person name="Miyasaka M."/>
            <person name="Horiuchi T."/>
        </authorList>
    </citation>
    <scope>NUCLEOTIDE SEQUENCE [MRNA]</scope>
</reference>
<reference key="2">
    <citation type="journal article" date="2004" name="Genome Res.">
        <title>The status, quality, and expansion of the NIH full-length cDNA project: the Mammalian Gene Collection (MGC).</title>
        <authorList>
            <consortium name="The MGC Project Team"/>
        </authorList>
    </citation>
    <scope>NUCLEOTIDE SEQUENCE [LARGE SCALE MRNA]</scope>
    <source>
        <tissue>Lung</tissue>
    </source>
</reference>
<comment type="function">
    <text evidence="1">ICAM proteins are ligands for the leukocyte adhesion protein LFA-1 (integrin alpha-L/beta-2). During leukocyte trans-endothelial migration, ICAM1 engagement promotes the assembly of endothelial apical cups through ARHGEF26/SGEF and RHOG activation (By similarity).</text>
</comment>
<comment type="subunit">
    <text evidence="2">Homodimer. Interacts with MUC1 and promotes cell aggregation in epithelial cells. Interacts with ARHGEF26/SGEF. Interacts (on T cell side) with CD81, CD247 and CD9 at immunological synapses between antigen-presenting cells and T cells.</text>
</comment>
<comment type="subcellular location">
    <subcellularLocation>
        <location>Membrane</location>
        <topology>Single-pass type I membrane protein</topology>
    </subcellularLocation>
</comment>
<comment type="PTM">
    <text evidence="1">Monoubiquitinated, which is promoted by MARCH9 and leads to endocytosis.</text>
</comment>
<comment type="similarity">
    <text evidence="6">Belongs to the immunoglobulin superfamily. ICAM family.</text>
</comment>
<sequence length="545" mass="60142">MASTRARPMLPLLLVLVAVVIPGPVGAQVSIHPTEAFLPRGGSVQVNCSSSCEDENLGLGLETNWMKDELSSGHNWKLFKLSDIGEDSRPLCFENCGTTQSSASATITVYSFPERVELDPLPAWQQVGKNLILRCLVEGGAPRTQLSVVLLRGNETLSRQAVDGDPKEITFTVLASRGDHGANFSCFTELDLRPQGLSLFKNVSEVRQLRTFDLPTRVLKLDTPDLLEVGTQQKFLCSLEGLFPASEAQIYLEMGGQMLTLESTNSRDFVSATASVEVTEKLDRTLQLRCVLELADQTLEMEKTLRIYNFSAPILTLSQPEVSEGDQVTVKCEAHGGAQVVLLNSTSPRPPTSQGTSPRPPTSQIQFTLNASPEDHKRRFFCSAALEVDGKSLFKNQTLELHVLYGPHLDKKDCLGNWTWQEGSQQTLTCQPQGNPAPNLTCSRKADGVPLPIGMVKSVKREMNGTYKCRAFSSRGSITRDVHLTVLYHDQNTWVIIVGVLVLIIAGFVIVASIYTYYRQRKIRIYKLQKAQEEALKLKVQAPPP</sequence>
<organism>
    <name type="scientific">Rattus norvegicus</name>
    <name type="common">Rat</name>
    <dbReference type="NCBI Taxonomy" id="10116"/>
    <lineage>
        <taxon>Eukaryota</taxon>
        <taxon>Metazoa</taxon>
        <taxon>Chordata</taxon>
        <taxon>Craniata</taxon>
        <taxon>Vertebrata</taxon>
        <taxon>Euteleostomi</taxon>
        <taxon>Mammalia</taxon>
        <taxon>Eutheria</taxon>
        <taxon>Euarchontoglires</taxon>
        <taxon>Glires</taxon>
        <taxon>Rodentia</taxon>
        <taxon>Myomorpha</taxon>
        <taxon>Muroidea</taxon>
        <taxon>Muridae</taxon>
        <taxon>Murinae</taxon>
        <taxon>Rattus</taxon>
    </lineage>
</organism>
<feature type="signal peptide" evidence="1">
    <location>
        <begin position="1"/>
        <end position="27"/>
    </location>
</feature>
<feature type="chain" id="PRO_0000014788" description="Intercellular adhesion molecule 1">
    <location>
        <begin position="28"/>
        <end position="545"/>
    </location>
</feature>
<feature type="topological domain" description="Extracellular" evidence="3">
    <location>
        <begin position="28"/>
        <end position="492"/>
    </location>
</feature>
<feature type="transmembrane region" description="Helical" evidence="3">
    <location>
        <begin position="493"/>
        <end position="517"/>
    </location>
</feature>
<feature type="topological domain" description="Cytoplasmic" evidence="3">
    <location>
        <begin position="518"/>
        <end position="545"/>
    </location>
</feature>
<feature type="domain" description="Ig-like C2-type 1">
    <location>
        <begin position="41"/>
        <end position="103"/>
    </location>
</feature>
<feature type="domain" description="Ig-like C2-type 2">
    <location>
        <begin position="128"/>
        <end position="193"/>
    </location>
</feature>
<feature type="domain" description="Ig-like C2-type 3">
    <location>
        <begin position="230"/>
        <end position="297"/>
    </location>
</feature>
<feature type="domain" description="Ig-like C2-type 4">
    <location>
        <begin position="325"/>
        <end position="389"/>
    </location>
</feature>
<feature type="domain" description="Ig-like C2-type 5">
    <location>
        <begin position="423"/>
        <end position="476"/>
    </location>
</feature>
<feature type="region of interest" description="Disordered" evidence="5">
    <location>
        <begin position="343"/>
        <end position="365"/>
    </location>
</feature>
<feature type="short sequence motif" description="Cell attachment site" evidence="3">
    <location>
        <begin position="177"/>
        <end position="179"/>
    </location>
</feature>
<feature type="glycosylation site" description="N-linked (GlcNAc...) asparagine" evidence="3">
    <location>
        <position position="47"/>
    </location>
</feature>
<feature type="glycosylation site" description="N-linked (GlcNAc...) asparagine" evidence="3">
    <location>
        <position position="154"/>
    </location>
</feature>
<feature type="glycosylation site" description="N-linked (GlcNAc...) asparagine" evidence="3">
    <location>
        <position position="183"/>
    </location>
</feature>
<feature type="glycosylation site" description="N-linked (GlcNAc...) asparagine" evidence="3">
    <location>
        <position position="202"/>
    </location>
</feature>
<feature type="glycosylation site" description="N-linked (GlcNAc...) asparagine" evidence="3">
    <location>
        <position position="309"/>
    </location>
</feature>
<feature type="glycosylation site" description="N-linked (GlcNAc...) asparagine" evidence="3">
    <location>
        <position position="344"/>
    </location>
</feature>
<feature type="glycosylation site" description="N-linked (GlcNAc...) asparagine" evidence="3">
    <location>
        <position position="396"/>
    </location>
</feature>
<feature type="glycosylation site" description="N-linked (GlcNAc...) asparagine" evidence="3">
    <location>
        <position position="417"/>
    </location>
</feature>
<feature type="glycosylation site" description="N-linked (GlcNAc...) asparagine" evidence="3">
    <location>
        <position position="439"/>
    </location>
</feature>
<feature type="glycosylation site" description="N-linked (GlcNAc...) asparagine" evidence="3">
    <location>
        <position position="464"/>
    </location>
</feature>
<feature type="disulfide bond" evidence="4">
    <location>
        <begin position="48"/>
        <end position="92"/>
    </location>
</feature>
<feature type="disulfide bond" evidence="4">
    <location>
        <begin position="52"/>
        <end position="96"/>
    </location>
</feature>
<feature type="disulfide bond" evidence="4">
    <location>
        <begin position="135"/>
        <end position="186"/>
    </location>
</feature>
<feature type="disulfide bond" evidence="4">
    <location>
        <begin position="237"/>
        <end position="290"/>
    </location>
</feature>
<feature type="disulfide bond" evidence="4">
    <location>
        <begin position="332"/>
        <end position="382"/>
    </location>
</feature>
<feature type="disulfide bond" evidence="2">
    <location>
        <begin position="414"/>
        <end position="430"/>
    </location>
</feature>
<feature type="disulfide bond" evidence="4">
    <location>
        <begin position="430"/>
        <end position="469"/>
    </location>
</feature>
<feature type="disulfide bond" evidence="2">
    <location>
        <begin position="442"/>
        <end position="469"/>
    </location>
</feature>
<gene>
    <name type="primary">Icam1</name>
    <name type="synonym">Icam-1</name>
</gene>